<protein>
    <recommendedName>
        <fullName>Interleukin-12 subunit alpha</fullName>
        <shortName>IL-12A</shortName>
    </recommendedName>
    <alternativeName>
        <fullName>Cytotoxic lymphocyte maturation factor 35 kDa subunit</fullName>
        <shortName>CLMF p35</shortName>
    </alternativeName>
    <alternativeName>
        <fullName>IL-12 subunit p35</fullName>
    </alternativeName>
</protein>
<reference key="1">
    <citation type="journal article" date="1997" name="Immunogenetics">
        <title>Molecular cloning of cat interleukin-12.</title>
        <authorList>
            <person name="Schijns V.E.C.J."/>
            <person name="Wierda C.M.H."/>
            <person name="Vahlenkamp T.W."/>
            <person name="Horzinek M.C."/>
        </authorList>
    </citation>
    <scope>NUCLEOTIDE SEQUENCE [MRNA]</scope>
    <source>
        <tissue>Peripheral blood</tissue>
    </source>
</reference>
<reference key="2">
    <citation type="journal article" date="1997" name="DNA Seq.">
        <title>Nucleotide and predicted peptide sequence of feline interleukin-12 (IL-12).</title>
        <authorList>
            <person name="Fehr D."/>
            <person name="Dean G.A."/>
            <person name="Huder J."/>
            <person name="Fan Z."/>
            <person name="Huettner S."/>
            <person name="Higgins J.W."/>
            <person name="Pedersen N.C."/>
            <person name="Lutz H."/>
        </authorList>
    </citation>
    <scope>NUCLEOTIDE SEQUENCE [MRNA]</scope>
</reference>
<keyword id="KW-0202">Cytokine</keyword>
<keyword id="KW-1015">Disulfide bond</keyword>
<keyword id="KW-0325">Glycoprotein</keyword>
<keyword id="KW-0339">Growth factor</keyword>
<keyword id="KW-1185">Reference proteome</keyword>
<keyword id="KW-0964">Secreted</keyword>
<keyword id="KW-0732">Signal</keyword>
<evidence type="ECO:0000250" key="1"/>
<evidence type="ECO:0000250" key="2">
    <source>
        <dbReference type="UniProtKB" id="P29459"/>
    </source>
</evidence>
<evidence type="ECO:0000250" key="3">
    <source>
        <dbReference type="UniProtKB" id="P43431"/>
    </source>
</evidence>
<evidence type="ECO:0000255" key="4"/>
<evidence type="ECO:0000305" key="5"/>
<comment type="function">
    <text evidence="2 3">Heterodimerizes with IL12B to form the IL-12 cytokine or with EBI3/IL27B to form the IL-35 cytokine. IL-12 is primarily produced by professional antigen-presenting cells (APCs) such as B-cells and dendritic cells (DCs) as well as macrophages and granulocytes and regulates T-cell and natural killer-cell responses, induces the production of interferon-gamma (IFN-gamma), favors the differentiation of T-helper 1 (Th1) cells and is an important link between innate resistance and adaptive immunity. Mechanistically, exerts its biological effects through a receptor composed of IL12R1 and IL12R2 subunits. Binding to the receptor results in the rapid tyrosine phosphorylation of a number of cellular substrates including the JAK family kinases TYK2 and JAK2. In turn, recruited STAT4 gets phosphorylated and translocates to the nucleus where it regulates cytokine/growth factor responsive genes (By similarity). As part of IL-35, plays essential roles in maintaining the immune homeostasis of the liver microenvironment and also functions as an immune-suppressive cytokine (By similarity). Mediates biological events through unconventional receptors composed of IL12RB2 and gp130/IL6ST heterodimers or homodimers. Signaling requires the transcription factors STAT1 and STAT4, which form a unique heterodimer that binds to distinct DNA sites (By similarity).</text>
</comment>
<comment type="subunit">
    <text evidence="2 3">Heterodimer with IL12B; disulfide-linked. This heterodimer is known as interleukin IL-12. Heterodimer with EBI3/IL27B; not disulfide-linked. This heterodimer is known as interleukin IL-35. Interacts with NBR1; this interaction promotes IL-12 secretion (By similarity).</text>
</comment>
<comment type="subcellular location">
    <subcellularLocation>
        <location evidence="2">Secreted</location>
    </subcellularLocation>
</comment>
<comment type="similarity">
    <text evidence="5">Belongs to the IL-6 superfamily.</text>
</comment>
<sequence>MCPPRGLLLVTILVLLNHLDHLSLARNLPTPTPSPGMFQCLNHSQTLLRAISNTLQKARQTLEFYSCTSEEIDHEDITKDKTSTVEACLPLELTMNESCLASREISLITNGSCLASRKTSFMTTLCLSSIYEDLKMYQVEFKAMNAKLLMDPKRQIFLDQNMLTAIDELLQALNVNSVTVPQNSSLEEPDFYKTKIKLCILLHAFRIRAVTINRMMSYLNAS</sequence>
<feature type="signal peptide" evidence="1">
    <location>
        <begin position="1"/>
        <end position="25"/>
    </location>
</feature>
<feature type="chain" id="PRO_0000015602" description="Interleukin-12 subunit alpha">
    <location>
        <begin position="26"/>
        <end position="222"/>
    </location>
</feature>
<feature type="glycosylation site" description="N-linked (GlcNAc...) asparagine" evidence="4">
    <location>
        <position position="42"/>
    </location>
</feature>
<feature type="glycosylation site" description="N-linked (GlcNAc...) asparagine" evidence="4">
    <location>
        <position position="96"/>
    </location>
</feature>
<feature type="glycosylation site" description="N-linked (GlcNAc...) asparagine" evidence="4">
    <location>
        <position position="110"/>
    </location>
</feature>
<feature type="glycosylation site" description="N-linked (GlcNAc...) asparagine" evidence="4">
    <location>
        <position position="183"/>
    </location>
</feature>
<feature type="disulfide bond" evidence="2">
    <location>
        <begin position="40"/>
        <end position="113"/>
    </location>
</feature>
<feature type="disulfide bond" evidence="1">
    <location>
        <begin position="67"/>
        <end position="199"/>
    </location>
</feature>
<feature type="disulfide bond" evidence="1">
    <location>
        <begin position="88"/>
        <end position="126"/>
    </location>
</feature>
<feature type="disulfide bond" description="Interchain (with C-200 in IL12B)" evidence="1">
    <location>
        <position position="99"/>
    </location>
</feature>
<feature type="sequence conflict" description="In Ref. 2; AAB93836." evidence="5" ref="2">
    <original>S</original>
    <variation>P</variation>
    <location>
        <position position="66"/>
    </location>
</feature>
<feature type="sequence conflict" description="In Ref. 2; AAB93836." evidence="5" ref="2">
    <original>A</original>
    <variation>S</variation>
    <location>
        <position position="221"/>
    </location>
</feature>
<name>IL12A_FELCA</name>
<gene>
    <name type="primary">IL12A</name>
</gene>
<dbReference type="EMBL" id="Y07761">
    <property type="protein sequence ID" value="CAA69067.1"/>
    <property type="molecule type" value="mRNA"/>
</dbReference>
<dbReference type="EMBL" id="U83185">
    <property type="protein sequence ID" value="AAB93836.1"/>
    <property type="molecule type" value="mRNA"/>
</dbReference>
<dbReference type="RefSeq" id="NP_001009833.1">
    <property type="nucleotide sequence ID" value="NM_001009833.1"/>
</dbReference>
<dbReference type="SMR" id="O02743"/>
<dbReference type="FunCoup" id="O02743">
    <property type="interactions" value="4"/>
</dbReference>
<dbReference type="STRING" id="9685.ENSFCAP00000010340"/>
<dbReference type="GlyCosmos" id="O02743">
    <property type="glycosylation" value="4 sites, No reported glycans"/>
</dbReference>
<dbReference type="PaxDb" id="9685-ENSFCAP00000010340"/>
<dbReference type="GeneID" id="493741"/>
<dbReference type="KEGG" id="fca:493741"/>
<dbReference type="CTD" id="3592"/>
<dbReference type="eggNOG" id="ENOG502S8JN">
    <property type="taxonomic scope" value="Eukaryota"/>
</dbReference>
<dbReference type="InParanoid" id="O02743"/>
<dbReference type="OrthoDB" id="9893660at2759"/>
<dbReference type="TreeFam" id="TF330814"/>
<dbReference type="Proteomes" id="UP000011712">
    <property type="component" value="Unplaced"/>
</dbReference>
<dbReference type="GO" id="GO:0043514">
    <property type="term" value="C:interleukin-12 complex"/>
    <property type="evidence" value="ECO:0000318"/>
    <property type="project" value="GO_Central"/>
</dbReference>
<dbReference type="GO" id="GO:0005125">
    <property type="term" value="F:cytokine activity"/>
    <property type="evidence" value="ECO:0007669"/>
    <property type="project" value="UniProtKB-KW"/>
</dbReference>
<dbReference type="GO" id="GO:0008083">
    <property type="term" value="F:growth factor activity"/>
    <property type="evidence" value="ECO:0007669"/>
    <property type="project" value="UniProtKB-KW"/>
</dbReference>
<dbReference type="GO" id="GO:0005143">
    <property type="term" value="F:interleukin-12 receptor binding"/>
    <property type="evidence" value="ECO:0000318"/>
    <property type="project" value="GO_Central"/>
</dbReference>
<dbReference type="GO" id="GO:0006955">
    <property type="term" value="P:immune response"/>
    <property type="evidence" value="ECO:0007669"/>
    <property type="project" value="InterPro"/>
</dbReference>
<dbReference type="GO" id="GO:0035722">
    <property type="term" value="P:interleukin-12-mediated signaling pathway"/>
    <property type="evidence" value="ECO:0000318"/>
    <property type="project" value="GO_Central"/>
</dbReference>
<dbReference type="FunFam" id="1.20.1250.10:FF:000020">
    <property type="entry name" value="Interleukin-12 subunit alpha"/>
    <property type="match status" value="1"/>
</dbReference>
<dbReference type="Gene3D" id="1.20.1250.10">
    <property type="match status" value="1"/>
</dbReference>
<dbReference type="InterPro" id="IPR009079">
    <property type="entry name" value="4_helix_cytokine-like_core"/>
</dbReference>
<dbReference type="InterPro" id="IPR050676">
    <property type="entry name" value="IL-12"/>
</dbReference>
<dbReference type="InterPro" id="IPR004281">
    <property type="entry name" value="IL-12_alpha"/>
</dbReference>
<dbReference type="PANTHER" id="PTHR48485:SF1">
    <property type="entry name" value="INTERLEUKIN-12 SUBUNIT ALPHA"/>
    <property type="match status" value="1"/>
</dbReference>
<dbReference type="PANTHER" id="PTHR48485">
    <property type="entry name" value="INTERLEUKIN-12 SUBUNIT BETA-RELATED"/>
    <property type="match status" value="1"/>
</dbReference>
<dbReference type="Pfam" id="PF03039">
    <property type="entry name" value="IL12"/>
    <property type="match status" value="1"/>
</dbReference>
<dbReference type="SUPFAM" id="SSF47266">
    <property type="entry name" value="4-helical cytokines"/>
    <property type="match status" value="1"/>
</dbReference>
<proteinExistence type="evidence at transcript level"/>
<accession>O02743</accession>
<accession>O46672</accession>
<organism>
    <name type="scientific">Felis catus</name>
    <name type="common">Cat</name>
    <name type="synonym">Felis silvestris catus</name>
    <dbReference type="NCBI Taxonomy" id="9685"/>
    <lineage>
        <taxon>Eukaryota</taxon>
        <taxon>Metazoa</taxon>
        <taxon>Chordata</taxon>
        <taxon>Craniata</taxon>
        <taxon>Vertebrata</taxon>
        <taxon>Euteleostomi</taxon>
        <taxon>Mammalia</taxon>
        <taxon>Eutheria</taxon>
        <taxon>Laurasiatheria</taxon>
        <taxon>Carnivora</taxon>
        <taxon>Feliformia</taxon>
        <taxon>Felidae</taxon>
        <taxon>Felinae</taxon>
        <taxon>Felis</taxon>
    </lineage>
</organism>